<gene>
    <name evidence="1" type="primary">trpC</name>
    <name type="ordered locus">CKR_1173</name>
</gene>
<accession>B9E149</accession>
<organism>
    <name type="scientific">Clostridium kluyveri (strain NBRC 12016)</name>
    <dbReference type="NCBI Taxonomy" id="583346"/>
    <lineage>
        <taxon>Bacteria</taxon>
        <taxon>Bacillati</taxon>
        <taxon>Bacillota</taxon>
        <taxon>Clostridia</taxon>
        <taxon>Eubacteriales</taxon>
        <taxon>Clostridiaceae</taxon>
        <taxon>Clostridium</taxon>
    </lineage>
</organism>
<reference key="1">
    <citation type="submission" date="2005-09" db="EMBL/GenBank/DDBJ databases">
        <title>Complete genome sequence of Clostridium kluyveri and comparative genomics of Clostridia species.</title>
        <authorList>
            <person name="Inui M."/>
            <person name="Nonaka H."/>
            <person name="Shinoda Y."/>
            <person name="Ikenaga Y."/>
            <person name="Abe M."/>
            <person name="Naito K."/>
            <person name="Vertes A.A."/>
            <person name="Yukawa H."/>
        </authorList>
    </citation>
    <scope>NUCLEOTIDE SEQUENCE [LARGE SCALE GENOMIC DNA]</scope>
    <source>
        <strain>NBRC 12016</strain>
    </source>
</reference>
<protein>
    <recommendedName>
        <fullName evidence="1">Indole-3-glycerol phosphate synthase</fullName>
        <shortName evidence="1">IGPS</shortName>
        <ecNumber evidence="1">4.1.1.48</ecNumber>
    </recommendedName>
</protein>
<keyword id="KW-0028">Amino-acid biosynthesis</keyword>
<keyword id="KW-0057">Aromatic amino acid biosynthesis</keyword>
<keyword id="KW-0210">Decarboxylase</keyword>
<keyword id="KW-0456">Lyase</keyword>
<keyword id="KW-0822">Tryptophan biosynthesis</keyword>
<evidence type="ECO:0000255" key="1">
    <source>
        <dbReference type="HAMAP-Rule" id="MF_00134"/>
    </source>
</evidence>
<proteinExistence type="inferred from homology"/>
<feature type="chain" id="PRO_1000198772" description="Indole-3-glycerol phosphate synthase">
    <location>
        <begin position="1"/>
        <end position="262"/>
    </location>
</feature>
<comment type="catalytic activity">
    <reaction evidence="1">
        <text>1-(2-carboxyphenylamino)-1-deoxy-D-ribulose 5-phosphate + H(+) = (1S,2R)-1-C-(indol-3-yl)glycerol 3-phosphate + CO2 + H2O</text>
        <dbReference type="Rhea" id="RHEA:23476"/>
        <dbReference type="ChEBI" id="CHEBI:15377"/>
        <dbReference type="ChEBI" id="CHEBI:15378"/>
        <dbReference type="ChEBI" id="CHEBI:16526"/>
        <dbReference type="ChEBI" id="CHEBI:58613"/>
        <dbReference type="ChEBI" id="CHEBI:58866"/>
        <dbReference type="EC" id="4.1.1.48"/>
    </reaction>
</comment>
<comment type="pathway">
    <text evidence="1">Amino-acid biosynthesis; L-tryptophan biosynthesis; L-tryptophan from chorismate: step 4/5.</text>
</comment>
<comment type="similarity">
    <text evidence="1">Belongs to the TrpC family.</text>
</comment>
<sequence length="262" mass="29918">MILDDIVGVKKKELEIRKESKPLKDIVDELSRIDEFKIRNFKGALINDDISIIGEIKRASPSKGIIDRKFEFEDICSTYETLDIDAVSVLTEQHYFKGKDEYLKKAKEFISKPVLRKDFIVDEYQVYESKLLGADAVLLIVRILKENLDKFYKIASSIGLQCIVEVHNKSELDIALKIEPEIIGINNRNLENFTVDLKNTENLINYMPENTAVISESGIKTSMDFKYIKSLPINGVLIGEGLMKKIYDIESIKKFIDSVKSG</sequence>
<name>TRPC_CLOK1</name>
<dbReference type="EC" id="4.1.1.48" evidence="1"/>
<dbReference type="EMBL" id="AP009049">
    <property type="protein sequence ID" value="BAH06224.1"/>
    <property type="molecule type" value="Genomic_DNA"/>
</dbReference>
<dbReference type="RefSeq" id="WP_012101664.1">
    <property type="nucleotide sequence ID" value="NC_011837.1"/>
</dbReference>
<dbReference type="SMR" id="B9E149"/>
<dbReference type="KEGG" id="ckr:CKR_1173"/>
<dbReference type="HOGENOM" id="CLU_034247_2_0_9"/>
<dbReference type="UniPathway" id="UPA00035">
    <property type="reaction ID" value="UER00043"/>
</dbReference>
<dbReference type="Proteomes" id="UP000007969">
    <property type="component" value="Chromosome"/>
</dbReference>
<dbReference type="GO" id="GO:0004425">
    <property type="term" value="F:indole-3-glycerol-phosphate synthase activity"/>
    <property type="evidence" value="ECO:0007669"/>
    <property type="project" value="UniProtKB-UniRule"/>
</dbReference>
<dbReference type="GO" id="GO:0004640">
    <property type="term" value="F:phosphoribosylanthranilate isomerase activity"/>
    <property type="evidence" value="ECO:0007669"/>
    <property type="project" value="TreeGrafter"/>
</dbReference>
<dbReference type="GO" id="GO:0000162">
    <property type="term" value="P:L-tryptophan biosynthetic process"/>
    <property type="evidence" value="ECO:0007669"/>
    <property type="project" value="UniProtKB-UniRule"/>
</dbReference>
<dbReference type="CDD" id="cd00331">
    <property type="entry name" value="IGPS"/>
    <property type="match status" value="1"/>
</dbReference>
<dbReference type="FunFam" id="3.20.20.70:FF:000024">
    <property type="entry name" value="Indole-3-glycerol phosphate synthase"/>
    <property type="match status" value="1"/>
</dbReference>
<dbReference type="Gene3D" id="3.20.20.70">
    <property type="entry name" value="Aldolase class I"/>
    <property type="match status" value="1"/>
</dbReference>
<dbReference type="HAMAP" id="MF_00134_B">
    <property type="entry name" value="IGPS_B"/>
    <property type="match status" value="1"/>
</dbReference>
<dbReference type="InterPro" id="IPR013785">
    <property type="entry name" value="Aldolase_TIM"/>
</dbReference>
<dbReference type="InterPro" id="IPR045186">
    <property type="entry name" value="Indole-3-glycerol_P_synth"/>
</dbReference>
<dbReference type="InterPro" id="IPR013798">
    <property type="entry name" value="Indole-3-glycerol_P_synth_dom"/>
</dbReference>
<dbReference type="InterPro" id="IPR001468">
    <property type="entry name" value="Indole-3-GlycerolPSynthase_CS"/>
</dbReference>
<dbReference type="InterPro" id="IPR011060">
    <property type="entry name" value="RibuloseP-bd_barrel"/>
</dbReference>
<dbReference type="NCBIfam" id="NF001377">
    <property type="entry name" value="PRK00278.2-4"/>
    <property type="match status" value="1"/>
</dbReference>
<dbReference type="PANTHER" id="PTHR22854:SF2">
    <property type="entry name" value="INDOLE-3-GLYCEROL-PHOSPHATE SYNTHASE"/>
    <property type="match status" value="1"/>
</dbReference>
<dbReference type="PANTHER" id="PTHR22854">
    <property type="entry name" value="TRYPTOPHAN BIOSYNTHESIS PROTEIN"/>
    <property type="match status" value="1"/>
</dbReference>
<dbReference type="Pfam" id="PF00218">
    <property type="entry name" value="IGPS"/>
    <property type="match status" value="1"/>
</dbReference>
<dbReference type="SUPFAM" id="SSF51366">
    <property type="entry name" value="Ribulose-phoshate binding barrel"/>
    <property type="match status" value="1"/>
</dbReference>
<dbReference type="PROSITE" id="PS00614">
    <property type="entry name" value="IGPS"/>
    <property type="match status" value="1"/>
</dbReference>